<organism>
    <name type="scientific">Verminephrobacter eiseniae (strain EF01-2)</name>
    <dbReference type="NCBI Taxonomy" id="391735"/>
    <lineage>
        <taxon>Bacteria</taxon>
        <taxon>Pseudomonadati</taxon>
        <taxon>Pseudomonadota</taxon>
        <taxon>Betaproteobacteria</taxon>
        <taxon>Burkholderiales</taxon>
        <taxon>Comamonadaceae</taxon>
        <taxon>Verminephrobacter</taxon>
    </lineage>
</organism>
<dbReference type="EC" id="2.1.2.9" evidence="1"/>
<dbReference type="EMBL" id="CP000542">
    <property type="protein sequence ID" value="ABM59786.1"/>
    <property type="molecule type" value="Genomic_DNA"/>
</dbReference>
<dbReference type="RefSeq" id="WP_011811773.1">
    <property type="nucleotide sequence ID" value="NC_008786.1"/>
</dbReference>
<dbReference type="SMR" id="A1WQ79"/>
<dbReference type="STRING" id="391735.Veis_4081"/>
<dbReference type="GeneID" id="76462425"/>
<dbReference type="KEGG" id="vei:Veis_4081"/>
<dbReference type="eggNOG" id="COG0223">
    <property type="taxonomic scope" value="Bacteria"/>
</dbReference>
<dbReference type="HOGENOM" id="CLU_033347_1_2_4"/>
<dbReference type="OrthoDB" id="9802815at2"/>
<dbReference type="Proteomes" id="UP000000374">
    <property type="component" value="Chromosome"/>
</dbReference>
<dbReference type="GO" id="GO:0005829">
    <property type="term" value="C:cytosol"/>
    <property type="evidence" value="ECO:0007669"/>
    <property type="project" value="TreeGrafter"/>
</dbReference>
<dbReference type="GO" id="GO:0004479">
    <property type="term" value="F:methionyl-tRNA formyltransferase activity"/>
    <property type="evidence" value="ECO:0007669"/>
    <property type="project" value="UniProtKB-UniRule"/>
</dbReference>
<dbReference type="CDD" id="cd08646">
    <property type="entry name" value="FMT_core_Met-tRNA-FMT_N"/>
    <property type="match status" value="1"/>
</dbReference>
<dbReference type="CDD" id="cd08704">
    <property type="entry name" value="Met_tRNA_FMT_C"/>
    <property type="match status" value="1"/>
</dbReference>
<dbReference type="Gene3D" id="3.10.25.10">
    <property type="entry name" value="Formyl transferase, C-terminal domain"/>
    <property type="match status" value="1"/>
</dbReference>
<dbReference type="Gene3D" id="3.40.50.170">
    <property type="entry name" value="Formyl transferase, N-terminal domain"/>
    <property type="match status" value="1"/>
</dbReference>
<dbReference type="HAMAP" id="MF_00182">
    <property type="entry name" value="Formyl_trans"/>
    <property type="match status" value="1"/>
</dbReference>
<dbReference type="InterPro" id="IPR005794">
    <property type="entry name" value="Fmt"/>
</dbReference>
<dbReference type="InterPro" id="IPR005793">
    <property type="entry name" value="Formyl_trans_C"/>
</dbReference>
<dbReference type="InterPro" id="IPR037022">
    <property type="entry name" value="Formyl_trans_C_sf"/>
</dbReference>
<dbReference type="InterPro" id="IPR002376">
    <property type="entry name" value="Formyl_transf_N"/>
</dbReference>
<dbReference type="InterPro" id="IPR036477">
    <property type="entry name" value="Formyl_transf_N_sf"/>
</dbReference>
<dbReference type="InterPro" id="IPR011034">
    <property type="entry name" value="Formyl_transferase-like_C_sf"/>
</dbReference>
<dbReference type="InterPro" id="IPR001555">
    <property type="entry name" value="GART_AS"/>
</dbReference>
<dbReference type="InterPro" id="IPR044135">
    <property type="entry name" value="Met-tRNA-FMT_C"/>
</dbReference>
<dbReference type="InterPro" id="IPR041711">
    <property type="entry name" value="Met-tRNA-FMT_N"/>
</dbReference>
<dbReference type="NCBIfam" id="TIGR00460">
    <property type="entry name" value="fmt"/>
    <property type="match status" value="1"/>
</dbReference>
<dbReference type="PANTHER" id="PTHR11138">
    <property type="entry name" value="METHIONYL-TRNA FORMYLTRANSFERASE"/>
    <property type="match status" value="1"/>
</dbReference>
<dbReference type="PANTHER" id="PTHR11138:SF5">
    <property type="entry name" value="METHIONYL-TRNA FORMYLTRANSFERASE, MITOCHONDRIAL"/>
    <property type="match status" value="1"/>
</dbReference>
<dbReference type="Pfam" id="PF02911">
    <property type="entry name" value="Formyl_trans_C"/>
    <property type="match status" value="1"/>
</dbReference>
<dbReference type="Pfam" id="PF00551">
    <property type="entry name" value="Formyl_trans_N"/>
    <property type="match status" value="1"/>
</dbReference>
<dbReference type="SUPFAM" id="SSF50486">
    <property type="entry name" value="FMT C-terminal domain-like"/>
    <property type="match status" value="1"/>
</dbReference>
<dbReference type="SUPFAM" id="SSF53328">
    <property type="entry name" value="Formyltransferase"/>
    <property type="match status" value="1"/>
</dbReference>
<dbReference type="PROSITE" id="PS00373">
    <property type="entry name" value="GART"/>
    <property type="match status" value="1"/>
</dbReference>
<keyword id="KW-0648">Protein biosynthesis</keyword>
<keyword id="KW-1185">Reference proteome</keyword>
<keyword id="KW-0808">Transferase</keyword>
<evidence type="ECO:0000255" key="1">
    <source>
        <dbReference type="HAMAP-Rule" id="MF_00182"/>
    </source>
</evidence>
<feature type="chain" id="PRO_1000020201" description="Methionyl-tRNA formyltransferase">
    <location>
        <begin position="1"/>
        <end position="330"/>
    </location>
</feature>
<feature type="binding site" evidence="1">
    <location>
        <begin position="117"/>
        <end position="120"/>
    </location>
    <ligand>
        <name>(6S)-5,6,7,8-tetrahydrofolate</name>
        <dbReference type="ChEBI" id="CHEBI:57453"/>
    </ligand>
</feature>
<name>FMT_VEREI</name>
<sequence>MKVVFAGTPGFARVALQRLLDAGFSLPLVLTRPDQPAGRGLQWQASPVKQCALAHGLAVAQPRSLRLDGRYPQDAAAARAALLAAQAEVMVVAAYGLILPQWVLDLPARGCLNIHASLLPRWRGAAPIQRAIEAGDTHTGVTIMQMDAGLDTGAMLLSQGSAIAPTDTTATLHDRLAALGADLIVQALEKMAAGADLPALAQPAQGVAYARKIEKSESSIDWSLPAQRIGQRIRAFDPAPGASTTCNGTSIKLWGYAIDGATIDGQRGVPRMHPGQILSADDSGIAVACGQGTALRLTVLQRAGGKRLAAADFLRGFALQPGMWLGAARA</sequence>
<accession>A1WQ79</accession>
<reference key="1">
    <citation type="submission" date="2006-12" db="EMBL/GenBank/DDBJ databases">
        <title>Complete sequence of chromosome 1 of Verminephrobacter eiseniae EF01-2.</title>
        <authorList>
            <person name="Copeland A."/>
            <person name="Lucas S."/>
            <person name="Lapidus A."/>
            <person name="Barry K."/>
            <person name="Detter J.C."/>
            <person name="Glavina del Rio T."/>
            <person name="Dalin E."/>
            <person name="Tice H."/>
            <person name="Pitluck S."/>
            <person name="Chertkov O."/>
            <person name="Brettin T."/>
            <person name="Bruce D."/>
            <person name="Han C."/>
            <person name="Tapia R."/>
            <person name="Gilna P."/>
            <person name="Schmutz J."/>
            <person name="Larimer F."/>
            <person name="Land M."/>
            <person name="Hauser L."/>
            <person name="Kyrpides N."/>
            <person name="Kim E."/>
            <person name="Stahl D."/>
            <person name="Richardson P."/>
        </authorList>
    </citation>
    <scope>NUCLEOTIDE SEQUENCE [LARGE SCALE GENOMIC DNA]</scope>
    <source>
        <strain>EF01-2</strain>
    </source>
</reference>
<protein>
    <recommendedName>
        <fullName evidence="1">Methionyl-tRNA formyltransferase</fullName>
        <ecNumber evidence="1">2.1.2.9</ecNumber>
    </recommendedName>
</protein>
<comment type="function">
    <text evidence="1">Attaches a formyl group to the free amino group of methionyl-tRNA(fMet). The formyl group appears to play a dual role in the initiator identity of N-formylmethionyl-tRNA by promoting its recognition by IF2 and preventing the misappropriation of this tRNA by the elongation apparatus.</text>
</comment>
<comment type="catalytic activity">
    <reaction evidence="1">
        <text>L-methionyl-tRNA(fMet) + (6R)-10-formyltetrahydrofolate = N-formyl-L-methionyl-tRNA(fMet) + (6S)-5,6,7,8-tetrahydrofolate + H(+)</text>
        <dbReference type="Rhea" id="RHEA:24380"/>
        <dbReference type="Rhea" id="RHEA-COMP:9952"/>
        <dbReference type="Rhea" id="RHEA-COMP:9953"/>
        <dbReference type="ChEBI" id="CHEBI:15378"/>
        <dbReference type="ChEBI" id="CHEBI:57453"/>
        <dbReference type="ChEBI" id="CHEBI:78530"/>
        <dbReference type="ChEBI" id="CHEBI:78844"/>
        <dbReference type="ChEBI" id="CHEBI:195366"/>
        <dbReference type="EC" id="2.1.2.9"/>
    </reaction>
</comment>
<comment type="similarity">
    <text evidence="1">Belongs to the Fmt family.</text>
</comment>
<gene>
    <name evidence="1" type="primary">fmt</name>
    <name type="ordered locus">Veis_4081</name>
</gene>
<proteinExistence type="inferred from homology"/>